<organism>
    <name type="scientific">Arabidopsis thaliana</name>
    <name type="common">Mouse-ear cress</name>
    <dbReference type="NCBI Taxonomy" id="3702"/>
    <lineage>
        <taxon>Eukaryota</taxon>
        <taxon>Viridiplantae</taxon>
        <taxon>Streptophyta</taxon>
        <taxon>Embryophyta</taxon>
        <taxon>Tracheophyta</taxon>
        <taxon>Spermatophyta</taxon>
        <taxon>Magnoliopsida</taxon>
        <taxon>eudicotyledons</taxon>
        <taxon>Gunneridae</taxon>
        <taxon>Pentapetalae</taxon>
        <taxon>rosids</taxon>
        <taxon>malvids</taxon>
        <taxon>Brassicales</taxon>
        <taxon>Brassicaceae</taxon>
        <taxon>Camelineae</taxon>
        <taxon>Arabidopsis</taxon>
    </lineage>
</organism>
<protein>
    <recommendedName>
        <fullName evidence="10">Acetolactate synthase small subunit 2, chloroplastic</fullName>
    </recommendedName>
    <alternativeName>
        <fullName evidence="8">ALS-interacting protein 3</fullName>
    </alternativeName>
    <alternativeName>
        <fullName evidence="9">Acetohydroxy-acid synthase small subunit 2</fullName>
    </alternativeName>
    <alternativeName>
        <fullName evidence="7">Protein valine-tolerant 1</fullName>
    </alternativeName>
</protein>
<name>ILVH2_ARATH</name>
<sequence>MAATTTATSLFSSRLHFQNQNQGYGFPAKTPNSLQVNQIIDGRKMRNATVLSAASTDKAITTAQSVAPTACDRVRRHTISVFVGDESGIINRIAGVFARRGYNIESLAVGLNEDKALFTIVVLGTDKVLQQVVEQLNKLVNVIKVEDLSKEPHVERELMLIKLNADPSTRSEIMWLVDIFRAKIVDTSEQSLTIEVTGDPGKMVALTTNLEKFGIKEIARTGKIALRREKMGETAPFWRFSAASYPHLVKESSHETVAEKTKLALTGNGNASSGGDVYPVEPYNDFKPVLDAHWGMVYDEDSSGLRSHTLSLLVANVPGVLNLITGAISRRGYNIQSLAVGPAEKEGLSRITTVIPGTDENIDKLVRQLQKLIDLQEIQNITHMPFAERELMLIKVAADTSARRDVLDIAQVFRAKAIDVSDHTITLEVTGDLRKMSALQTQLEAYGICEVARTGRVALVRESGVDSTYLRGYSLPL</sequence>
<dbReference type="EMBL" id="AB005242">
    <property type="protein sequence ID" value="BAB09596.1"/>
    <property type="molecule type" value="Genomic_DNA"/>
</dbReference>
<dbReference type="EMBL" id="CP002688">
    <property type="protein sequence ID" value="AED92272.1"/>
    <property type="molecule type" value="Genomic_DNA"/>
</dbReference>
<dbReference type="EMBL" id="CP002688">
    <property type="protein sequence ID" value="AED92273.1"/>
    <property type="molecule type" value="Genomic_DNA"/>
</dbReference>
<dbReference type="EMBL" id="BT021989">
    <property type="protein sequence ID" value="AAY25401.1"/>
    <property type="molecule type" value="mRNA"/>
</dbReference>
<dbReference type="EMBL" id="AK226906">
    <property type="protein sequence ID" value="BAE98982.1"/>
    <property type="molecule type" value="mRNA"/>
</dbReference>
<dbReference type="EMBL" id="AK316823">
    <property type="protein sequence ID" value="BAH19535.1"/>
    <property type="molecule type" value="mRNA"/>
</dbReference>
<dbReference type="RefSeq" id="NP_197133.1">
    <property type="nucleotide sequence ID" value="NM_121634.4"/>
</dbReference>
<dbReference type="RefSeq" id="NP_850829.1">
    <property type="nucleotide sequence ID" value="NM_180498.3"/>
</dbReference>
<dbReference type="SMR" id="Q9FFF4"/>
<dbReference type="FunCoup" id="Q9FFF4">
    <property type="interactions" value="768"/>
</dbReference>
<dbReference type="STRING" id="3702.Q9FFF4"/>
<dbReference type="GlyGen" id="Q9FFF4">
    <property type="glycosylation" value="1 site"/>
</dbReference>
<dbReference type="PaxDb" id="3702-AT5G16290.2"/>
<dbReference type="ProMEX" id="Q9FFF4"/>
<dbReference type="ProteomicsDB" id="247367"/>
<dbReference type="EnsemblPlants" id="AT5G16290.1">
    <property type="protein sequence ID" value="AT5G16290.1"/>
    <property type="gene ID" value="AT5G16290"/>
</dbReference>
<dbReference type="EnsemblPlants" id="AT5G16290.2">
    <property type="protein sequence ID" value="AT5G16290.2"/>
    <property type="gene ID" value="AT5G16290"/>
</dbReference>
<dbReference type="GeneID" id="831490"/>
<dbReference type="Gramene" id="AT5G16290.1">
    <property type="protein sequence ID" value="AT5G16290.1"/>
    <property type="gene ID" value="AT5G16290"/>
</dbReference>
<dbReference type="Gramene" id="AT5G16290.2">
    <property type="protein sequence ID" value="AT5G16290.2"/>
    <property type="gene ID" value="AT5G16290"/>
</dbReference>
<dbReference type="KEGG" id="ath:AT5G16290"/>
<dbReference type="Araport" id="AT5G16290"/>
<dbReference type="TAIR" id="AT5G16290">
    <property type="gene designation" value="VAT1"/>
</dbReference>
<dbReference type="eggNOG" id="KOG2663">
    <property type="taxonomic scope" value="Eukaryota"/>
</dbReference>
<dbReference type="HOGENOM" id="CLU_032954_1_0_1"/>
<dbReference type="InParanoid" id="Q9FFF4"/>
<dbReference type="OMA" id="EAYGICE"/>
<dbReference type="PhylomeDB" id="Q9FFF4"/>
<dbReference type="BioCyc" id="ARA:AT5G16290-MONOMER"/>
<dbReference type="UniPathway" id="UPA00047">
    <property type="reaction ID" value="UER00055"/>
</dbReference>
<dbReference type="UniPathway" id="UPA00049">
    <property type="reaction ID" value="UER00059"/>
</dbReference>
<dbReference type="CD-CODE" id="4299E36E">
    <property type="entry name" value="Nucleolus"/>
</dbReference>
<dbReference type="PRO" id="PR:Q9FFF4"/>
<dbReference type="Proteomes" id="UP000006548">
    <property type="component" value="Chromosome 5"/>
</dbReference>
<dbReference type="ExpressionAtlas" id="Q9FFF4">
    <property type="expression patterns" value="baseline and differential"/>
</dbReference>
<dbReference type="GO" id="GO:0009507">
    <property type="term" value="C:chloroplast"/>
    <property type="evidence" value="ECO:0000314"/>
    <property type="project" value="TAIR"/>
</dbReference>
<dbReference type="GO" id="GO:0005777">
    <property type="term" value="C:peroxisome"/>
    <property type="evidence" value="ECO:0000314"/>
    <property type="project" value="TAIR"/>
</dbReference>
<dbReference type="GO" id="GO:1990610">
    <property type="term" value="F:acetolactate synthase regulator activity"/>
    <property type="evidence" value="ECO:0007669"/>
    <property type="project" value="InterPro"/>
</dbReference>
<dbReference type="GO" id="GO:0009097">
    <property type="term" value="P:isoleucine biosynthetic process"/>
    <property type="evidence" value="ECO:0007669"/>
    <property type="project" value="UniProtKB-UniPathway"/>
</dbReference>
<dbReference type="GO" id="GO:0006551">
    <property type="term" value="P:L-leucine metabolic process"/>
    <property type="evidence" value="ECO:0000315"/>
    <property type="project" value="TAIR"/>
</dbReference>
<dbReference type="GO" id="GO:0009099">
    <property type="term" value="P:L-valine biosynthetic process"/>
    <property type="evidence" value="ECO:0000315"/>
    <property type="project" value="TAIR"/>
</dbReference>
<dbReference type="GO" id="GO:0050790">
    <property type="term" value="P:regulation of catalytic activity"/>
    <property type="evidence" value="ECO:0000314"/>
    <property type="project" value="TAIR"/>
</dbReference>
<dbReference type="GO" id="GO:0006573">
    <property type="term" value="P:valine metabolic process"/>
    <property type="evidence" value="ECO:0000315"/>
    <property type="project" value="TAIR"/>
</dbReference>
<dbReference type="CDD" id="cd04878">
    <property type="entry name" value="ACT_AHAS"/>
    <property type="match status" value="2"/>
</dbReference>
<dbReference type="FunFam" id="3.30.70.1150:FF:000001">
    <property type="entry name" value="Acetolactate synthase small subunit"/>
    <property type="match status" value="2"/>
</dbReference>
<dbReference type="FunFam" id="3.30.70.260:FF:000001">
    <property type="entry name" value="Acetolactate synthase, small subunit"/>
    <property type="match status" value="2"/>
</dbReference>
<dbReference type="Gene3D" id="3.30.70.260">
    <property type="match status" value="2"/>
</dbReference>
<dbReference type="Gene3D" id="3.30.70.1150">
    <property type="entry name" value="ACT-like. Chain A, domain 2"/>
    <property type="match status" value="2"/>
</dbReference>
<dbReference type="InterPro" id="IPR004789">
    <property type="entry name" value="Acetalactate_synth_ssu"/>
</dbReference>
<dbReference type="InterPro" id="IPR027271">
    <property type="entry name" value="Acetolactate_synth/TF_NikR_C"/>
</dbReference>
<dbReference type="InterPro" id="IPR019455">
    <property type="entry name" value="Acetolactate_synth_ssu_C"/>
</dbReference>
<dbReference type="InterPro" id="IPR045865">
    <property type="entry name" value="ACT-like_dom_sf"/>
</dbReference>
<dbReference type="InterPro" id="IPR002912">
    <property type="entry name" value="ACT_dom"/>
</dbReference>
<dbReference type="InterPro" id="IPR039557">
    <property type="entry name" value="AHAS_ACT"/>
</dbReference>
<dbReference type="InterPro" id="IPR054480">
    <property type="entry name" value="AHAS_small-like_ACT"/>
</dbReference>
<dbReference type="NCBIfam" id="TIGR00119">
    <property type="entry name" value="acolac_sm"/>
    <property type="match status" value="2"/>
</dbReference>
<dbReference type="NCBIfam" id="NF008864">
    <property type="entry name" value="PRK11895.1"/>
    <property type="match status" value="2"/>
</dbReference>
<dbReference type="PANTHER" id="PTHR30239">
    <property type="entry name" value="ACETOLACTATE SYNTHASE SMALL SUBUNIT"/>
    <property type="match status" value="1"/>
</dbReference>
<dbReference type="PANTHER" id="PTHR30239:SF18">
    <property type="entry name" value="ACETOLACTATE SYNTHASE SMALL SUBUNIT 2, CHLOROPLASTIC"/>
    <property type="match status" value="1"/>
</dbReference>
<dbReference type="Pfam" id="PF22629">
    <property type="entry name" value="ACT_AHAS_ss"/>
    <property type="match status" value="2"/>
</dbReference>
<dbReference type="Pfam" id="PF10369">
    <property type="entry name" value="ALS_ss_C"/>
    <property type="match status" value="2"/>
</dbReference>
<dbReference type="SUPFAM" id="SSF55021">
    <property type="entry name" value="ACT-like"/>
    <property type="match status" value="4"/>
</dbReference>
<dbReference type="PROSITE" id="PS51671">
    <property type="entry name" value="ACT"/>
    <property type="match status" value="2"/>
</dbReference>
<comment type="function">
    <text evidence="4 5 6">Regulatory subunit of acetohydroxy-acid synthase (PubMed:20497381, PubMed:28388946). Involved in the feed-back inhibition by branched-chain amino acids but not in herbicide tolerance (PubMed:20497381, PubMed:28388946). May play a role in valine and isoleucine-mediated feedback inhibition in roots (PubMed:28388946). In vitro, inhibited by valine, but not leucine or isoleucine (PubMed:28522547). Required for reproductive development and sodium homeostasis (PubMed:28388946).</text>
</comment>
<comment type="pathway">
    <text>Amino-acid biosynthesis; L-isoleucine biosynthesis; L-isoleucine from 2-oxobutanoate: step 1/4.</text>
</comment>
<comment type="pathway">
    <text>Amino-acid biosynthesis; L-valine biosynthesis; L-valine from pyruvate: step 1/4.</text>
</comment>
<comment type="subunit">
    <text evidence="1">The acetolactate synthase complex contains 4 homodimers of the large catalytic subunits, and 1 homotetramer of the small regulatory subunits.</text>
</comment>
<comment type="subcellular location">
    <subcellularLocation>
        <location evidence="5">Plastid</location>
        <location evidence="5">Chloroplast</location>
    </subcellularLocation>
    <subcellularLocation>
        <location evidence="5">Peroxisome</location>
    </subcellularLocation>
</comment>
<comment type="tissue specificity">
    <text evidence="4">Expressed in roots in the vascular tissuem in cells around the quiescent center, in floral organs at the tips of young siliques and in the joint region between the silique and the pedicel. Barely detectable in mature leaves or siliques.</text>
</comment>
<comment type="disruption phenotype">
    <text evidence="5">No visible phenotype under normal growth conditions (PubMed:28388946). The double mutants aip1 and aip3 exhibit a lethal phenotype; they fail to develop adult organs, are chlorotic and die (PubMed:28388946).</text>
</comment>
<comment type="similarity">
    <text evidence="10">Belongs to the acetolactate synthase small subunit family.</text>
</comment>
<proteinExistence type="evidence at protein level"/>
<keyword id="KW-0028">Amino-acid biosynthesis</keyword>
<keyword id="KW-0100">Branched-chain amino acid biosynthesis</keyword>
<keyword id="KW-0150">Chloroplast</keyword>
<keyword id="KW-0576">Peroxisome</keyword>
<keyword id="KW-0934">Plastid</keyword>
<keyword id="KW-1185">Reference proteome</keyword>
<keyword id="KW-0677">Repeat</keyword>
<keyword id="KW-0809">Transit peptide</keyword>
<gene>
    <name evidence="9" type="primary">AHASS2</name>
    <name evidence="8" type="synonym">AIP3</name>
    <name evidence="7" type="synonym">VAT1</name>
    <name evidence="11" type="ordered locus">At5g16290</name>
    <name evidence="12" type="ORF">MQK4.1</name>
</gene>
<evidence type="ECO:0000250" key="1">
    <source>
        <dbReference type="UniProtKB" id="Q93YZ7"/>
    </source>
</evidence>
<evidence type="ECO:0000255" key="2"/>
<evidence type="ECO:0000255" key="3">
    <source>
        <dbReference type="PROSITE-ProRule" id="PRU01007"/>
    </source>
</evidence>
<evidence type="ECO:0000269" key="4">
    <source>
    </source>
</evidence>
<evidence type="ECO:0000269" key="5">
    <source>
    </source>
</evidence>
<evidence type="ECO:0000269" key="6">
    <source>
    </source>
</evidence>
<evidence type="ECO:0000303" key="7">
    <source>
    </source>
</evidence>
<evidence type="ECO:0000303" key="8">
    <source>
    </source>
</evidence>
<evidence type="ECO:0000303" key="9">
    <source>
    </source>
</evidence>
<evidence type="ECO:0000305" key="10"/>
<evidence type="ECO:0000312" key="11">
    <source>
        <dbReference type="EMBL" id="AED92272.1"/>
    </source>
</evidence>
<evidence type="ECO:0000312" key="12">
    <source>
        <dbReference type="EMBL" id="BAB09596.1"/>
    </source>
</evidence>
<reference key="1">
    <citation type="journal article" date="1997" name="DNA Res.">
        <title>Structural analysis of Arabidopsis thaliana chromosome 5. I. Sequence features of the 1.6 Mb regions covered by twenty physically assigned P1 clones.</title>
        <authorList>
            <person name="Sato S."/>
            <person name="Kotani H."/>
            <person name="Nakamura Y."/>
            <person name="Kaneko T."/>
            <person name="Asamizu E."/>
            <person name="Fukami M."/>
            <person name="Miyajima N."/>
            <person name="Tabata S."/>
        </authorList>
    </citation>
    <scope>NUCLEOTIDE SEQUENCE [LARGE SCALE GENOMIC DNA]</scope>
    <source>
        <strain>cv. Columbia</strain>
    </source>
</reference>
<reference key="2">
    <citation type="journal article" date="2017" name="Plant J.">
        <title>Araport11: a complete reannotation of the Arabidopsis thaliana reference genome.</title>
        <authorList>
            <person name="Cheng C.Y."/>
            <person name="Krishnakumar V."/>
            <person name="Chan A.P."/>
            <person name="Thibaud-Nissen F."/>
            <person name="Schobel S."/>
            <person name="Town C.D."/>
        </authorList>
    </citation>
    <scope>GENOME REANNOTATION</scope>
    <source>
        <strain>cv. Columbia</strain>
    </source>
</reference>
<reference key="3">
    <citation type="submission" date="2005-05" db="EMBL/GenBank/DDBJ databases">
        <title>Arabidopsis ORF clones.</title>
        <authorList>
            <person name="Cheuk R."/>
            <person name="Chen H."/>
            <person name="Kim C.J."/>
            <person name="Shinn P."/>
            <person name="Ecker J.R."/>
        </authorList>
    </citation>
    <scope>NUCLEOTIDE SEQUENCE [LARGE SCALE MRNA]</scope>
</reference>
<reference key="4">
    <citation type="submission" date="2006-07" db="EMBL/GenBank/DDBJ databases">
        <title>Large-scale analysis of RIKEN Arabidopsis full-length (RAFL) cDNAs.</title>
        <authorList>
            <person name="Totoki Y."/>
            <person name="Seki M."/>
            <person name="Ishida J."/>
            <person name="Nakajima M."/>
            <person name="Enju A."/>
            <person name="Kamiya A."/>
            <person name="Narusaka M."/>
            <person name="Shin-i T."/>
            <person name="Nakagawa M."/>
            <person name="Sakamoto N."/>
            <person name="Oishi K."/>
            <person name="Kohara Y."/>
            <person name="Kobayashi M."/>
            <person name="Toyoda A."/>
            <person name="Sakaki Y."/>
            <person name="Sakurai T."/>
            <person name="Iida K."/>
            <person name="Akiyama K."/>
            <person name="Satou M."/>
            <person name="Toyoda T."/>
            <person name="Konagaya A."/>
            <person name="Carninci P."/>
            <person name="Kawai J."/>
            <person name="Hayashizaki Y."/>
            <person name="Shinozaki K."/>
        </authorList>
    </citation>
    <scope>NUCLEOTIDE SEQUENCE [LARGE SCALE MRNA]</scope>
    <source>
        <strain>cv. Columbia</strain>
    </source>
</reference>
<reference key="5">
    <citation type="journal article" date="2009" name="DNA Res.">
        <title>Analysis of multiple occurrences of alternative splicing events in Arabidopsis thaliana using novel sequenced full-length cDNAs.</title>
        <authorList>
            <person name="Iida K."/>
            <person name="Fukami-Kobayashi K."/>
            <person name="Toyoda A."/>
            <person name="Sakaki Y."/>
            <person name="Kobayashi M."/>
            <person name="Seki M."/>
            <person name="Shinozaki K."/>
        </authorList>
    </citation>
    <scope>NUCLEOTIDE SEQUENCE [LARGE SCALE MRNA]</scope>
    <source>
        <strain>cv. Columbia</strain>
        <tissue>Rosette leaf</tissue>
    </source>
</reference>
<reference key="6">
    <citation type="journal article" date="2010" name="Plant J.">
        <title>Genetic analysis of pathway regulation for enhancing branched-chain amino acid biosynthesis in plants.</title>
        <authorList>
            <person name="Chen H."/>
            <person name="Saksa K."/>
            <person name="Zhao F."/>
            <person name="Qiu J."/>
            <person name="Xiong L."/>
        </authorList>
    </citation>
    <scope>FUNCTION</scope>
    <scope>MUTAGENESIS OF GLY-88; THR-119 AND ARG-453</scope>
    <scope>TISSUE SPECIFICITY</scope>
    <source>
        <strain>cv. Columbia</strain>
    </source>
</reference>
<reference key="7">
    <citation type="journal article" date="2017" name="BMC Plant Biol.">
        <title>Acetolactate synthase regulatory subunits play divergent and overlapping roles in branched-chain amino acid synthesis and Arabidopsis development.</title>
        <authorList>
            <person name="Dezfulian M.H."/>
            <person name="Foreman C."/>
            <person name="Jalili E."/>
            <person name="Pal M."/>
            <person name="Dhaliwal R.K."/>
            <person name="Roberto D.K."/>
            <person name="Imre K.M."/>
            <person name="Kohalmi S.E."/>
            <person name="Crosby W.L."/>
        </authorList>
    </citation>
    <scope>FUNCTION</scope>
    <scope>SUBCELLULAR LOCATION</scope>
    <scope>DISRUPTION PHENOTYPE</scope>
</reference>
<reference key="8">
    <citation type="journal article" date="2017" name="Plant Cell">
        <title>A regulatory hierarchy of the Arabidopsis branched-chain amino acid metabolic network.</title>
        <authorList>
            <person name="Xing A."/>
            <person name="Last R.L."/>
        </authorList>
    </citation>
    <scope>FUNCTION</scope>
</reference>
<feature type="transit peptide" description="Chloroplast" evidence="2">
    <location>
        <begin position="1"/>
        <end position="53"/>
    </location>
</feature>
<feature type="chain" id="PRO_0000420865" description="Acetolactate synthase small subunit 2, chloroplastic">
    <location>
        <begin position="54"/>
        <end position="477"/>
    </location>
</feature>
<feature type="domain" description="ACT 1" evidence="3">
    <location>
        <begin position="78"/>
        <end position="150"/>
    </location>
</feature>
<feature type="domain" description="ACT 2" evidence="3">
    <location>
        <begin position="309"/>
        <end position="383"/>
    </location>
</feature>
<feature type="binding site" evidence="1">
    <location>
        <position position="85"/>
    </location>
    <ligand>
        <name>L-valine</name>
        <dbReference type="ChEBI" id="CHEBI:57762"/>
    </ligand>
</feature>
<feature type="binding site" evidence="1">
    <location>
        <position position="89"/>
    </location>
    <ligand>
        <name>L-valine</name>
        <dbReference type="ChEBI" id="CHEBI:57762"/>
    </ligand>
</feature>
<feature type="binding site" evidence="1">
    <location>
        <position position="90"/>
    </location>
    <ligand>
        <name>L-valine</name>
        <dbReference type="ChEBI" id="CHEBI:57762"/>
    </ligand>
</feature>
<feature type="binding site" evidence="1">
    <location>
        <position position="103"/>
    </location>
    <ligand>
        <name>L-valine</name>
        <dbReference type="ChEBI" id="CHEBI:57762"/>
    </ligand>
</feature>
<feature type="binding site" evidence="1">
    <location>
        <position position="104"/>
    </location>
    <ligand>
        <name>L-valine</name>
        <dbReference type="ChEBI" id="CHEBI:57762"/>
    </ligand>
</feature>
<feature type="binding site" evidence="1">
    <location>
        <position position="316"/>
    </location>
    <ligand>
        <name>L-valine</name>
        <dbReference type="ChEBI" id="CHEBI:57762"/>
    </ligand>
</feature>
<feature type="binding site" evidence="1">
    <location>
        <position position="320"/>
    </location>
    <ligand>
        <name>L-valine</name>
        <dbReference type="ChEBI" id="CHEBI:57762"/>
    </ligand>
</feature>
<feature type="binding site" evidence="1">
    <location>
        <position position="321"/>
    </location>
    <ligand>
        <name>L-valine</name>
        <dbReference type="ChEBI" id="CHEBI:57762"/>
    </ligand>
</feature>
<feature type="binding site" evidence="1">
    <location>
        <position position="334"/>
    </location>
    <ligand>
        <name>L-valine</name>
        <dbReference type="ChEBI" id="CHEBI:57762"/>
    </ligand>
</feature>
<feature type="binding site" evidence="1">
    <location>
        <position position="335"/>
    </location>
    <ligand>
        <name>L-valine</name>
        <dbReference type="ChEBI" id="CHEBI:57762"/>
    </ligand>
</feature>
<feature type="mutagenesis site" description="Resistance to valine inhibition." evidence="4">
    <original>G</original>
    <variation>D</variation>
    <location>
        <position position="88"/>
    </location>
</feature>
<feature type="mutagenesis site" description="In vat1-1; resistance to valine inhibition." evidence="4">
    <original>T</original>
    <variation>I</variation>
    <location>
        <position position="119"/>
    </location>
</feature>
<feature type="mutagenesis site" description="In vat1-3; resistance to valine inhibition." evidence="4">
    <original>R</original>
    <variation>Q</variation>
    <location>
        <position position="453"/>
    </location>
</feature>
<feature type="sequence conflict" description="In Ref. 5; BAH19535." evidence="10" ref="5">
    <original>K</original>
    <variation>Q</variation>
    <location>
        <position position="216"/>
    </location>
</feature>
<accession>Q9FFF4</accession>
<accession>B9DFL8</accession>